<name>STE20_CANAL</name>
<gene>
    <name type="primary">CST20</name>
    <name type="synonym">HST20</name>
    <name type="synonym">STE20</name>
    <name type="ordered locus">CAALFM_C502340CA</name>
    <name type="ORF">CaO19.11717</name>
    <name type="ORF">CaO19.4242</name>
</gene>
<evidence type="ECO:0000250" key="1"/>
<evidence type="ECO:0000255" key="2">
    <source>
        <dbReference type="PROSITE-ProRule" id="PRU00057"/>
    </source>
</evidence>
<evidence type="ECO:0000255" key="3">
    <source>
        <dbReference type="PROSITE-ProRule" id="PRU00159"/>
    </source>
</evidence>
<evidence type="ECO:0000255" key="4">
    <source>
        <dbReference type="PROSITE-ProRule" id="PRU10027"/>
    </source>
</evidence>
<evidence type="ECO:0000256" key="5">
    <source>
        <dbReference type="SAM" id="MobiDB-lite"/>
    </source>
</evidence>
<evidence type="ECO:0000269" key="6">
    <source>
    </source>
</evidence>
<evidence type="ECO:0000305" key="7"/>
<organism>
    <name type="scientific">Candida albicans (strain SC5314 / ATCC MYA-2876)</name>
    <name type="common">Yeast</name>
    <dbReference type="NCBI Taxonomy" id="237561"/>
    <lineage>
        <taxon>Eukaryota</taxon>
        <taxon>Fungi</taxon>
        <taxon>Dikarya</taxon>
        <taxon>Ascomycota</taxon>
        <taxon>Saccharomycotina</taxon>
        <taxon>Pichiomycetes</taxon>
        <taxon>Debaryomycetaceae</taxon>
        <taxon>Candida/Lodderomyces clade</taxon>
        <taxon>Candida</taxon>
    </lineage>
</organism>
<sequence length="1228" mass="132773">MSILSENNPTQTSITDPNESSHLHNPELNSGTRVASGPGPGPEVESTPLAPPTEVMNTTSANTSSLSLGSPMHEKIKQFDQDEVDTGETNDRTIESGSSDIDDSQQSHNNNNNNNNNESNPESSEADDEKTQGMPPRMPGTFNVKGLHQGDDSDNEKQYTELTKSINKRTSKDSYSPGTLESPGTLNALETNNVSPAVIEEEQHTSSLEDLSLSLQHQNENARLSAPRSAPPQVSTSKTSSFHDMSSVISSSTSVHKIPSNPTSTRGSHLSSYKSTLDPGKPAQAAAPPPPEIDIDNLLTKSELDSETDTLSSATNSPNLLRNDTLQGIPTRDDENIDDSPRQLSQNTSATSRNTSGTSTSTVVKNSRSGTSKLTSTSTAHNQTAAITPIIPSHNKFHQQVINTNSTNSSSSLEPLGVGINSNSSPKNGKKRKSGSKVRGVFSSMFGKNKSTSSSSSSNSGSNSHSQEVNIKISTPFNAKHLAHVGIDDNGSYTGLPIEWERLLSASGITKKEQQQHPQAVMDIVAFYQDTSENPDDAAFKKFHFDNNKSSSSGWSNENTPPATPGGSNSGSGGGGGGAPSSPHRTPPSSIIEKNNVEQKVITPSQSMPTKTESKQSENQHPHEDNATQYTPRTPTSHVQEGQFIPSRPAPKPPSTPLSSMSVSHKTPSSQSLPRSDSQSDIRSSTPKSHQDISPSKIKIRSISSKSLKSMRSRKSGDKFTHIAPAPPPPSLPSIPKSKSHSASLSSQLRPATNGSTTAPIPASAAFGGENNALPRQRINEFKAHRAPPPPPSASPAPPVPPAPPANLLSEQTSEIPQQRTAPSQALADVTAPTNIYEIQQTKYQEAQQKLREKKARELEEIQRLREKNERQNRQQETGQNNADTASGGSNIAPPVPVPNKKPPSGSGGGRDAKQAALIAQKKREEKKRKNLQIIAKLKTICNPGDPNELYVDLVKIGQGASGGVFLAHDVRDKSNIVAIKQMNLEQQPKKELIINEILVMKGSSHPNIVNFIDSYLLKGDLWVIMEYMEGGSLTDIVTHSVMTEGQIGVVCRETLKGLKFLHSKGVIHRDIKSDNILLNMDGNIKITDFGFCAQINEINSKRITMVGTPYWMAPEIVSRKEYGPKVDVWSLGIMIIEMLEGEPPYLNETPLRALYLIATNGTPKLKDPESLSYDIRKFLAWCLQVDFNKRADADELLHDNFITECDDVSSLSPLVKIARLKKMSESD</sequence>
<protein>
    <recommendedName>
        <fullName>Serine/threonine-protein kinase CST20</fullName>
        <ecNumber>2.7.11.1</ecNumber>
    </recommendedName>
</protein>
<comment type="function">
    <text evidence="1 6">MAP4K component of the MAPK pathway required for the mating pheromone response, and the regulation of cell polarity and cell cycle. Phosphorylates histone H2B to form H2BS10ph (By similarity). Required for hyphal formation and virulence.</text>
</comment>
<comment type="catalytic activity">
    <reaction>
        <text>L-seryl-[protein] + ATP = O-phospho-L-seryl-[protein] + ADP + H(+)</text>
        <dbReference type="Rhea" id="RHEA:17989"/>
        <dbReference type="Rhea" id="RHEA-COMP:9863"/>
        <dbReference type="Rhea" id="RHEA-COMP:11604"/>
        <dbReference type="ChEBI" id="CHEBI:15378"/>
        <dbReference type="ChEBI" id="CHEBI:29999"/>
        <dbReference type="ChEBI" id="CHEBI:30616"/>
        <dbReference type="ChEBI" id="CHEBI:83421"/>
        <dbReference type="ChEBI" id="CHEBI:456216"/>
        <dbReference type="EC" id="2.7.11.1"/>
    </reaction>
</comment>
<comment type="catalytic activity">
    <reaction>
        <text>L-threonyl-[protein] + ATP = O-phospho-L-threonyl-[protein] + ADP + H(+)</text>
        <dbReference type="Rhea" id="RHEA:46608"/>
        <dbReference type="Rhea" id="RHEA-COMP:11060"/>
        <dbReference type="Rhea" id="RHEA-COMP:11605"/>
        <dbReference type="ChEBI" id="CHEBI:15378"/>
        <dbReference type="ChEBI" id="CHEBI:30013"/>
        <dbReference type="ChEBI" id="CHEBI:30616"/>
        <dbReference type="ChEBI" id="CHEBI:61977"/>
        <dbReference type="ChEBI" id="CHEBI:456216"/>
        <dbReference type="EC" id="2.7.11.1"/>
    </reaction>
</comment>
<comment type="subcellular location">
    <subcellularLocation>
        <location evidence="1">Cytoplasm</location>
    </subcellularLocation>
    <subcellularLocation>
        <location evidence="1">Nucleus</location>
    </subcellularLocation>
</comment>
<comment type="similarity">
    <text evidence="7">Belongs to the protein kinase superfamily. STE Ser/Thr protein kinase family. STE20 subfamily.</text>
</comment>
<proteinExistence type="inferred from homology"/>
<feature type="chain" id="PRO_0000413040" description="Serine/threonine-protein kinase CST20">
    <location>
        <begin position="1"/>
        <end position="1228"/>
    </location>
</feature>
<feature type="domain" description="CRIB" evidence="2">
    <location>
        <begin position="473"/>
        <end position="486"/>
    </location>
</feature>
<feature type="domain" description="Protein kinase" evidence="3">
    <location>
        <begin position="951"/>
        <end position="1203"/>
    </location>
</feature>
<feature type="region of interest" description="Disordered" evidence="5">
    <location>
        <begin position="1"/>
        <end position="382"/>
    </location>
</feature>
<feature type="region of interest" description="Disordered" evidence="5">
    <location>
        <begin position="405"/>
        <end position="468"/>
    </location>
</feature>
<feature type="region of interest" description="Disordered" evidence="5">
    <location>
        <begin position="543"/>
        <end position="829"/>
    </location>
</feature>
<feature type="region of interest" description="Disordered" evidence="5">
    <location>
        <begin position="865"/>
        <end position="917"/>
    </location>
</feature>
<feature type="compositionally biased region" description="Polar residues" evidence="5">
    <location>
        <begin position="1"/>
        <end position="18"/>
    </location>
</feature>
<feature type="compositionally biased region" description="Low complexity" evidence="5">
    <location>
        <begin position="57"/>
        <end position="70"/>
    </location>
</feature>
<feature type="compositionally biased region" description="Low complexity" evidence="5">
    <location>
        <begin position="95"/>
        <end position="123"/>
    </location>
</feature>
<feature type="compositionally biased region" description="Basic and acidic residues" evidence="5">
    <location>
        <begin position="148"/>
        <end position="159"/>
    </location>
</feature>
<feature type="compositionally biased region" description="Polar residues" evidence="5">
    <location>
        <begin position="173"/>
        <end position="195"/>
    </location>
</feature>
<feature type="compositionally biased region" description="Polar residues" evidence="5">
    <location>
        <begin position="205"/>
        <end position="222"/>
    </location>
</feature>
<feature type="compositionally biased region" description="Polar residues" evidence="5">
    <location>
        <begin position="232"/>
        <end position="244"/>
    </location>
</feature>
<feature type="compositionally biased region" description="Low complexity" evidence="5">
    <location>
        <begin position="246"/>
        <end position="255"/>
    </location>
</feature>
<feature type="compositionally biased region" description="Polar residues" evidence="5">
    <location>
        <begin position="260"/>
        <end position="275"/>
    </location>
</feature>
<feature type="compositionally biased region" description="Polar residues" evidence="5">
    <location>
        <begin position="309"/>
        <end position="328"/>
    </location>
</feature>
<feature type="compositionally biased region" description="Low complexity" evidence="5">
    <location>
        <begin position="347"/>
        <end position="367"/>
    </location>
</feature>
<feature type="compositionally biased region" description="Polar residues" evidence="5">
    <location>
        <begin position="368"/>
        <end position="382"/>
    </location>
</feature>
<feature type="compositionally biased region" description="Low complexity" evidence="5">
    <location>
        <begin position="437"/>
        <end position="466"/>
    </location>
</feature>
<feature type="compositionally biased region" description="Polar residues" evidence="5">
    <location>
        <begin position="548"/>
        <end position="559"/>
    </location>
</feature>
<feature type="compositionally biased region" description="Gly residues" evidence="5">
    <location>
        <begin position="568"/>
        <end position="579"/>
    </location>
</feature>
<feature type="compositionally biased region" description="Polar residues" evidence="5">
    <location>
        <begin position="602"/>
        <end position="611"/>
    </location>
</feature>
<feature type="compositionally biased region" description="Basic and acidic residues" evidence="5">
    <location>
        <begin position="612"/>
        <end position="626"/>
    </location>
</feature>
<feature type="compositionally biased region" description="Polar residues" evidence="5">
    <location>
        <begin position="627"/>
        <end position="640"/>
    </location>
</feature>
<feature type="compositionally biased region" description="Low complexity" evidence="5">
    <location>
        <begin position="668"/>
        <end position="681"/>
    </location>
</feature>
<feature type="compositionally biased region" description="Low complexity" evidence="5">
    <location>
        <begin position="693"/>
        <end position="708"/>
    </location>
</feature>
<feature type="compositionally biased region" description="Low complexity" evidence="5">
    <location>
        <begin position="734"/>
        <end position="747"/>
    </location>
</feature>
<feature type="compositionally biased region" description="Polar residues" evidence="5">
    <location>
        <begin position="748"/>
        <end position="759"/>
    </location>
</feature>
<feature type="compositionally biased region" description="Pro residues" evidence="5">
    <location>
        <begin position="787"/>
        <end position="805"/>
    </location>
</feature>
<feature type="compositionally biased region" description="Polar residues" evidence="5">
    <location>
        <begin position="809"/>
        <end position="824"/>
    </location>
</feature>
<feature type="compositionally biased region" description="Basic and acidic residues" evidence="5">
    <location>
        <begin position="865"/>
        <end position="874"/>
    </location>
</feature>
<feature type="compositionally biased region" description="Polar residues" evidence="5">
    <location>
        <begin position="875"/>
        <end position="890"/>
    </location>
</feature>
<feature type="active site" description="Proton acceptor" evidence="3 4">
    <location>
        <position position="1071"/>
    </location>
</feature>
<feature type="binding site" evidence="3">
    <location>
        <begin position="957"/>
        <end position="965"/>
    </location>
    <ligand>
        <name>ATP</name>
        <dbReference type="ChEBI" id="CHEBI:30616"/>
    </ligand>
</feature>
<feature type="binding site" evidence="3">
    <location>
        <position position="981"/>
    </location>
    <ligand>
        <name>ATP</name>
        <dbReference type="ChEBI" id="CHEBI:30616"/>
    </ligand>
</feature>
<accession>P0CY24</accession>
<accession>A0A1D8PNE1</accession>
<accession>O13431</accession>
<accession>Q5AGD7</accession>
<accession>Q92212</accession>
<dbReference type="EC" id="2.7.11.1"/>
<dbReference type="EMBL" id="CP017627">
    <property type="protein sequence ID" value="AOW29660.1"/>
    <property type="molecule type" value="Genomic_DNA"/>
</dbReference>
<dbReference type="RefSeq" id="XP_720551.1">
    <property type="nucleotide sequence ID" value="XM_715458.1"/>
</dbReference>
<dbReference type="SMR" id="P0CY24"/>
<dbReference type="BioGRID" id="1220755">
    <property type="interactions" value="2"/>
</dbReference>
<dbReference type="FunCoup" id="P0CY24">
    <property type="interactions" value="423"/>
</dbReference>
<dbReference type="STRING" id="237561.P0CY24"/>
<dbReference type="EnsemblFungi" id="C5_02340C_A-T">
    <property type="protein sequence ID" value="C5_02340C_A-T-p1"/>
    <property type="gene ID" value="C5_02340C_A"/>
</dbReference>
<dbReference type="GeneID" id="3637790"/>
<dbReference type="KEGG" id="cal:CAALFM_C502340CA"/>
<dbReference type="CGD" id="CAL0000198103">
    <property type="gene designation" value="CST20"/>
</dbReference>
<dbReference type="VEuPathDB" id="FungiDB:C5_02340C_A"/>
<dbReference type="eggNOG" id="KOG0578">
    <property type="taxonomic scope" value="Eukaryota"/>
</dbReference>
<dbReference type="HOGENOM" id="CLU_000288_26_0_1"/>
<dbReference type="InParanoid" id="P0CY24"/>
<dbReference type="OMA" id="RKFLAWC"/>
<dbReference type="OrthoDB" id="248923at2759"/>
<dbReference type="PRO" id="PR:P0CY24"/>
<dbReference type="Proteomes" id="UP000000559">
    <property type="component" value="Chromosome 5"/>
</dbReference>
<dbReference type="GO" id="GO:0005737">
    <property type="term" value="C:cytoplasm"/>
    <property type="evidence" value="ECO:0000318"/>
    <property type="project" value="GO_Central"/>
</dbReference>
<dbReference type="GO" id="GO:0005634">
    <property type="term" value="C:nucleus"/>
    <property type="evidence" value="ECO:0007669"/>
    <property type="project" value="UniProtKB-SubCell"/>
</dbReference>
<dbReference type="GO" id="GO:0005524">
    <property type="term" value="F:ATP binding"/>
    <property type="evidence" value="ECO:0007669"/>
    <property type="project" value="UniProtKB-KW"/>
</dbReference>
<dbReference type="GO" id="GO:0004672">
    <property type="term" value="F:protein kinase activity"/>
    <property type="evidence" value="ECO:0000316"/>
    <property type="project" value="CGD"/>
</dbReference>
<dbReference type="GO" id="GO:0106310">
    <property type="term" value="F:protein serine kinase activity"/>
    <property type="evidence" value="ECO:0007669"/>
    <property type="project" value="RHEA"/>
</dbReference>
<dbReference type="GO" id="GO:0004674">
    <property type="term" value="F:protein serine/threonine kinase activity"/>
    <property type="evidence" value="ECO:0000318"/>
    <property type="project" value="GO_Central"/>
</dbReference>
<dbReference type="GO" id="GO:0009267">
    <property type="term" value="P:cellular response to starvation"/>
    <property type="evidence" value="ECO:0000315"/>
    <property type="project" value="CGD"/>
</dbReference>
<dbReference type="GO" id="GO:0001410">
    <property type="term" value="P:chlamydospore formation"/>
    <property type="evidence" value="ECO:0000315"/>
    <property type="project" value="CGD"/>
</dbReference>
<dbReference type="GO" id="GO:0030447">
    <property type="term" value="P:filamentous growth"/>
    <property type="evidence" value="ECO:0000315"/>
    <property type="project" value="CGD"/>
</dbReference>
<dbReference type="GO" id="GO:0044182">
    <property type="term" value="P:filamentous growth of a population of unicellular organisms"/>
    <property type="evidence" value="ECO:0000315"/>
    <property type="project" value="CGD"/>
</dbReference>
<dbReference type="GO" id="GO:0036170">
    <property type="term" value="P:filamentous growth of a population of unicellular organisms in response to starvation"/>
    <property type="evidence" value="ECO:0000315"/>
    <property type="project" value="CGD"/>
</dbReference>
<dbReference type="GO" id="GO:0031505">
    <property type="term" value="P:fungal-type cell wall organization"/>
    <property type="evidence" value="ECO:0000315"/>
    <property type="project" value="CGD"/>
</dbReference>
<dbReference type="GO" id="GO:0035556">
    <property type="term" value="P:intracellular signal transduction"/>
    <property type="evidence" value="ECO:0000318"/>
    <property type="project" value="GO_Central"/>
</dbReference>
<dbReference type="GO" id="GO:0000165">
    <property type="term" value="P:MAPK cascade"/>
    <property type="evidence" value="ECO:0000316"/>
    <property type="project" value="CGD"/>
</dbReference>
<dbReference type="GO" id="GO:1990277">
    <property type="term" value="P:parasexual reproduction with cellular fusion"/>
    <property type="evidence" value="ECO:0000315"/>
    <property type="project" value="CGD"/>
</dbReference>
<dbReference type="GO" id="GO:1900436">
    <property type="term" value="P:positive regulation of filamentous growth of a population of unicellular organisms in response to starvation"/>
    <property type="evidence" value="ECO:0000315"/>
    <property type="project" value="CGD"/>
</dbReference>
<dbReference type="GO" id="GO:0043408">
    <property type="term" value="P:regulation of MAPK cascade"/>
    <property type="evidence" value="ECO:0000318"/>
    <property type="project" value="GO_Central"/>
</dbReference>
<dbReference type="CDD" id="cd01093">
    <property type="entry name" value="CRIB_PAK_like"/>
    <property type="match status" value="1"/>
</dbReference>
<dbReference type="CDD" id="cd06614">
    <property type="entry name" value="STKc_PAK"/>
    <property type="match status" value="1"/>
</dbReference>
<dbReference type="CDD" id="cd22249">
    <property type="entry name" value="UDM1_RNF168_RNF169-like"/>
    <property type="match status" value="1"/>
</dbReference>
<dbReference type="FunFam" id="1.10.510.10:FF:000011">
    <property type="entry name" value="Non-specific serine/threonine protein kinase"/>
    <property type="match status" value="1"/>
</dbReference>
<dbReference type="FunFam" id="3.30.200.20:FF:000385">
    <property type="entry name" value="Non-specific serine/threonine protein kinase"/>
    <property type="match status" value="1"/>
</dbReference>
<dbReference type="Gene3D" id="3.90.810.10">
    <property type="entry name" value="CRIB domain"/>
    <property type="match status" value="1"/>
</dbReference>
<dbReference type="Gene3D" id="3.30.200.20">
    <property type="entry name" value="Phosphorylase Kinase, domain 1"/>
    <property type="match status" value="1"/>
</dbReference>
<dbReference type="Gene3D" id="1.10.510.10">
    <property type="entry name" value="Transferase(Phosphotransferase) domain 1"/>
    <property type="match status" value="1"/>
</dbReference>
<dbReference type="InterPro" id="IPR000095">
    <property type="entry name" value="CRIB_dom"/>
</dbReference>
<dbReference type="InterPro" id="IPR036936">
    <property type="entry name" value="CRIB_dom_sf"/>
</dbReference>
<dbReference type="InterPro" id="IPR011009">
    <property type="entry name" value="Kinase-like_dom_sf"/>
</dbReference>
<dbReference type="InterPro" id="IPR051931">
    <property type="entry name" value="PAK3-like"/>
</dbReference>
<dbReference type="InterPro" id="IPR033923">
    <property type="entry name" value="PAK_BD"/>
</dbReference>
<dbReference type="InterPro" id="IPR000719">
    <property type="entry name" value="Prot_kinase_dom"/>
</dbReference>
<dbReference type="InterPro" id="IPR017441">
    <property type="entry name" value="Protein_kinase_ATP_BS"/>
</dbReference>
<dbReference type="InterPro" id="IPR008271">
    <property type="entry name" value="Ser/Thr_kinase_AS"/>
</dbReference>
<dbReference type="PANTHER" id="PTHR45832">
    <property type="entry name" value="SERINE/THREONINE-PROTEIN KINASE SAMKA-RELATED-RELATED"/>
    <property type="match status" value="1"/>
</dbReference>
<dbReference type="PANTHER" id="PTHR45832:SF22">
    <property type="entry name" value="SERINE_THREONINE-PROTEIN KINASE SAMKA-RELATED"/>
    <property type="match status" value="1"/>
</dbReference>
<dbReference type="Pfam" id="PF00786">
    <property type="entry name" value="PBD"/>
    <property type="match status" value="1"/>
</dbReference>
<dbReference type="Pfam" id="PF00069">
    <property type="entry name" value="Pkinase"/>
    <property type="match status" value="1"/>
</dbReference>
<dbReference type="SMART" id="SM00285">
    <property type="entry name" value="PBD"/>
    <property type="match status" value="1"/>
</dbReference>
<dbReference type="SMART" id="SM00220">
    <property type="entry name" value="S_TKc"/>
    <property type="match status" value="1"/>
</dbReference>
<dbReference type="SUPFAM" id="SSF56112">
    <property type="entry name" value="Protein kinase-like (PK-like)"/>
    <property type="match status" value="1"/>
</dbReference>
<dbReference type="PROSITE" id="PS50108">
    <property type="entry name" value="CRIB"/>
    <property type="match status" value="1"/>
</dbReference>
<dbReference type="PROSITE" id="PS00107">
    <property type="entry name" value="PROTEIN_KINASE_ATP"/>
    <property type="match status" value="1"/>
</dbReference>
<dbReference type="PROSITE" id="PS50011">
    <property type="entry name" value="PROTEIN_KINASE_DOM"/>
    <property type="match status" value="1"/>
</dbReference>
<dbReference type="PROSITE" id="PS00108">
    <property type="entry name" value="PROTEIN_KINASE_ST"/>
    <property type="match status" value="1"/>
</dbReference>
<reference key="1">
    <citation type="journal article" date="2004" name="Proc. Natl. Acad. Sci. U.S.A.">
        <title>The diploid genome sequence of Candida albicans.</title>
        <authorList>
            <person name="Jones T."/>
            <person name="Federspiel N.A."/>
            <person name="Chibana H."/>
            <person name="Dungan J."/>
            <person name="Kalman S."/>
            <person name="Magee B.B."/>
            <person name="Newport G."/>
            <person name="Thorstenson Y.R."/>
            <person name="Agabian N."/>
            <person name="Magee P.T."/>
            <person name="Davis R.W."/>
            <person name="Scherer S."/>
        </authorList>
    </citation>
    <scope>NUCLEOTIDE SEQUENCE [LARGE SCALE GENOMIC DNA]</scope>
    <source>
        <strain>SC5314 / ATCC MYA-2876</strain>
    </source>
</reference>
<reference key="2">
    <citation type="journal article" date="2007" name="Genome Biol.">
        <title>Assembly of the Candida albicans genome into sixteen supercontigs aligned on the eight chromosomes.</title>
        <authorList>
            <person name="van het Hoog M."/>
            <person name="Rast T.J."/>
            <person name="Martchenko M."/>
            <person name="Grindle S."/>
            <person name="Dignard D."/>
            <person name="Hogues H."/>
            <person name="Cuomo C."/>
            <person name="Berriman M."/>
            <person name="Scherer S."/>
            <person name="Magee B.B."/>
            <person name="Whiteway M."/>
            <person name="Chibana H."/>
            <person name="Nantel A."/>
            <person name="Magee P.T."/>
        </authorList>
    </citation>
    <scope>GENOME REANNOTATION</scope>
    <source>
        <strain>SC5314 / ATCC MYA-2876</strain>
    </source>
</reference>
<reference key="3">
    <citation type="journal article" date="2013" name="Genome Biol.">
        <title>Assembly of a phased diploid Candida albicans genome facilitates allele-specific measurements and provides a simple model for repeat and indel structure.</title>
        <authorList>
            <person name="Muzzey D."/>
            <person name="Schwartz K."/>
            <person name="Weissman J.S."/>
            <person name="Sherlock G."/>
        </authorList>
    </citation>
    <scope>NUCLEOTIDE SEQUENCE [LARGE SCALE GENOMIC DNA]</scope>
    <scope>GENOME REANNOTATION</scope>
    <source>
        <strain>SC5314 / ATCC MYA-2876</strain>
    </source>
</reference>
<reference key="4">
    <citation type="journal article" date="2002" name="Mol. Microbiol.">
        <title>A conserved mitogen-activated protein kinase pathway is required for mating in Candida albicans.</title>
        <authorList>
            <person name="Chen J."/>
            <person name="Chen J."/>
            <person name="Lane S."/>
            <person name="Liu H."/>
        </authorList>
    </citation>
    <scope>FUNCTION</scope>
</reference>
<keyword id="KW-0067">ATP-binding</keyword>
<keyword id="KW-0963">Cytoplasm</keyword>
<keyword id="KW-0418">Kinase</keyword>
<keyword id="KW-0547">Nucleotide-binding</keyword>
<keyword id="KW-0539">Nucleus</keyword>
<keyword id="KW-1185">Reference proteome</keyword>
<keyword id="KW-0723">Serine/threonine-protein kinase</keyword>
<keyword id="KW-0808">Transferase</keyword>